<keyword id="KW-0004">4Fe-4S</keyword>
<keyword id="KW-0963">Cytoplasm</keyword>
<keyword id="KW-0408">Iron</keyword>
<keyword id="KW-0411">Iron-sulfur</keyword>
<keyword id="KW-0479">Metal-binding</keyword>
<keyword id="KW-0949">S-adenosyl-L-methionine</keyword>
<keyword id="KW-0808">Transferase</keyword>
<keyword id="KW-0819">tRNA processing</keyword>
<protein>
    <recommendedName>
        <fullName>Threonylcarbamoyladenosine tRNA methylthiotransferase MtaB</fullName>
        <ecNumber>2.8.4.5</ecNumber>
    </recommendedName>
    <alternativeName>
        <fullName>tRNA-t(6)A37 methylthiotransferase</fullName>
    </alternativeName>
</protein>
<sequence length="421" mass="47190">MTVAEVKGTFKLVCLGCRVNQYEVQAYRDQLTILGYQEVLDSEIPADLCIINTCAVTASAESSGRHAVRQLCRQNPTAHIVVTGCLGESDKEFFASLDRQCTLVSNKEKSRLIEKIFSYDTTFPEFKIHSFEGKSRAFIKVQDGCNSFCSYCIIPYLRGRSVSRPAEKILAEIAGVVDQGYREVVIAGINVGDYCDGERSLASLIEQVDQIPGIERIRISSIDPDDITEDLHRAITSSRHTCPSSHLVLQSGSNSILKRMNRKYSRGDFLDCVEKFRASDPRYAFTTDVIVGFPGESDQDFEDTLRIIEDVGFIKVHSFPFSARRRTKAYTFDNQIPNQVIYERKKYLAEVAKRVGQKEMMKRLGETTEVLVEKVTGQVATGHSPYFEKVSFPVVGTVAINTLVSVRLDRVEEEGLIGEIV</sequence>
<organism>
    <name type="scientific">Chlamydia pneumoniae</name>
    <name type="common">Chlamydophila pneumoniae</name>
    <dbReference type="NCBI Taxonomy" id="83558"/>
    <lineage>
        <taxon>Bacteria</taxon>
        <taxon>Pseudomonadati</taxon>
        <taxon>Chlamydiota</taxon>
        <taxon>Chlamydiia</taxon>
        <taxon>Chlamydiales</taxon>
        <taxon>Chlamydiaceae</taxon>
        <taxon>Chlamydia/Chlamydophila group</taxon>
        <taxon>Chlamydia</taxon>
    </lineage>
</organism>
<accession>Q9Z874</accession>
<accession>Q9JS09</accession>
<feature type="chain" id="PRO_0000141733" description="Threonylcarbamoyladenosine tRNA methylthiotransferase MtaB">
    <location>
        <begin position="1"/>
        <end position="421"/>
    </location>
</feature>
<feature type="domain" description="MTTase N-terminal" evidence="2">
    <location>
        <begin position="8"/>
        <end position="121"/>
    </location>
</feature>
<feature type="domain" description="Radical SAM core" evidence="3">
    <location>
        <begin position="131"/>
        <end position="358"/>
    </location>
</feature>
<feature type="binding site" evidence="2">
    <location>
        <position position="17"/>
    </location>
    <ligand>
        <name>[4Fe-4S] cluster</name>
        <dbReference type="ChEBI" id="CHEBI:49883"/>
        <label>1</label>
    </ligand>
</feature>
<feature type="binding site" evidence="2">
    <location>
        <position position="54"/>
    </location>
    <ligand>
        <name>[4Fe-4S] cluster</name>
        <dbReference type="ChEBI" id="CHEBI:49883"/>
        <label>1</label>
    </ligand>
</feature>
<feature type="binding site" evidence="2">
    <location>
        <position position="85"/>
    </location>
    <ligand>
        <name>[4Fe-4S] cluster</name>
        <dbReference type="ChEBI" id="CHEBI:49883"/>
        <label>1</label>
    </ligand>
</feature>
<feature type="binding site" evidence="2">
    <location>
        <position position="145"/>
    </location>
    <ligand>
        <name>[4Fe-4S] cluster</name>
        <dbReference type="ChEBI" id="CHEBI:49883"/>
        <label>2</label>
        <note>4Fe-4S-S-AdoMet</note>
    </ligand>
</feature>
<feature type="binding site" evidence="2">
    <location>
        <position position="149"/>
    </location>
    <ligand>
        <name>[4Fe-4S] cluster</name>
        <dbReference type="ChEBI" id="CHEBI:49883"/>
        <label>2</label>
        <note>4Fe-4S-S-AdoMet</note>
    </ligand>
</feature>
<feature type="binding site" evidence="2">
    <location>
        <position position="152"/>
    </location>
    <ligand>
        <name>[4Fe-4S] cluster</name>
        <dbReference type="ChEBI" id="CHEBI:49883"/>
        <label>2</label>
        <note>4Fe-4S-S-AdoMet</note>
    </ligand>
</feature>
<feature type="sequence conflict" description="In Ref. 1; AAD18617." evidence="4" ref="1">
    <original>Q</original>
    <variation>R</variation>
    <location>
        <position position="210"/>
    </location>
</feature>
<reference key="1">
    <citation type="journal article" date="1999" name="Nat. Genet.">
        <title>Comparative genomes of Chlamydia pneumoniae and C. trachomatis.</title>
        <authorList>
            <person name="Kalman S."/>
            <person name="Mitchell W.P."/>
            <person name="Marathe R."/>
            <person name="Lammel C.J."/>
            <person name="Fan J."/>
            <person name="Hyman R.W."/>
            <person name="Olinger L."/>
            <person name="Grimwood J."/>
            <person name="Davis R.W."/>
            <person name="Stephens R.S."/>
        </authorList>
    </citation>
    <scope>NUCLEOTIDE SEQUENCE [LARGE SCALE GENOMIC DNA]</scope>
    <source>
        <strain>CWL029</strain>
    </source>
</reference>
<reference key="2">
    <citation type="journal article" date="2000" name="Nucleic Acids Res.">
        <title>Genome sequences of Chlamydia trachomatis MoPn and Chlamydia pneumoniae AR39.</title>
        <authorList>
            <person name="Read T.D."/>
            <person name="Brunham R.C."/>
            <person name="Shen C."/>
            <person name="Gill S.R."/>
            <person name="Heidelberg J.F."/>
            <person name="White O."/>
            <person name="Hickey E.K."/>
            <person name="Peterson J.D."/>
            <person name="Utterback T.R."/>
            <person name="Berry K.J."/>
            <person name="Bass S."/>
            <person name="Linher K.D."/>
            <person name="Weidman J.F."/>
            <person name="Khouri H.M."/>
            <person name="Craven B."/>
            <person name="Bowman C."/>
            <person name="Dodson R.J."/>
            <person name="Gwinn M.L."/>
            <person name="Nelson W.C."/>
            <person name="DeBoy R.T."/>
            <person name="Kolonay J.F."/>
            <person name="McClarty G."/>
            <person name="Salzberg S.L."/>
            <person name="Eisen J.A."/>
            <person name="Fraser C.M."/>
        </authorList>
    </citation>
    <scope>NUCLEOTIDE SEQUENCE [LARGE SCALE GENOMIC DNA]</scope>
    <source>
        <strain>AR39</strain>
    </source>
</reference>
<reference key="3">
    <citation type="journal article" date="2000" name="Nucleic Acids Res.">
        <title>Comparison of whole genome sequences of Chlamydia pneumoniae J138 from Japan and CWL029 from USA.</title>
        <authorList>
            <person name="Shirai M."/>
            <person name="Hirakawa H."/>
            <person name="Kimoto M."/>
            <person name="Tabuchi M."/>
            <person name="Kishi F."/>
            <person name="Ouchi K."/>
            <person name="Shiba T."/>
            <person name="Ishii K."/>
            <person name="Hattori M."/>
            <person name="Kuhara S."/>
            <person name="Nakazawa T."/>
        </authorList>
    </citation>
    <scope>NUCLEOTIDE SEQUENCE [LARGE SCALE GENOMIC DNA]</scope>
    <source>
        <strain>J138</strain>
    </source>
</reference>
<reference key="4">
    <citation type="submission" date="2002-05" db="EMBL/GenBank/DDBJ databases">
        <title>The genome sequence of Chlamydia pneumoniae TW183 and comparison with other Chlamydia strains based on whole genome sequence analysis.</title>
        <authorList>
            <person name="Geng M.M."/>
            <person name="Schuhmacher A."/>
            <person name="Muehldorfer I."/>
            <person name="Bensch K.W."/>
            <person name="Schaefer K.P."/>
            <person name="Schneider S."/>
            <person name="Pohl T."/>
            <person name="Essig A."/>
            <person name="Marre R."/>
            <person name="Melchers K."/>
        </authorList>
    </citation>
    <scope>NUCLEOTIDE SEQUENCE [LARGE SCALE GENOMIC DNA]</scope>
    <source>
        <strain>TW-183</strain>
    </source>
</reference>
<gene>
    <name type="primary">mtaB</name>
    <name type="ordered locus">CPn_0477</name>
    <name type="ordered locus">CP_0277</name>
    <name type="ordered locus">CPj0477</name>
    <name type="ordered locus">CpB0496</name>
</gene>
<name>MTAB_CHLPN</name>
<dbReference type="EC" id="2.8.4.5"/>
<dbReference type="EMBL" id="AE001363">
    <property type="protein sequence ID" value="AAD18617.1"/>
    <property type="molecule type" value="Genomic_DNA"/>
</dbReference>
<dbReference type="EMBL" id="AE002161">
    <property type="protein sequence ID" value="AAF38135.1"/>
    <property type="molecule type" value="Genomic_DNA"/>
</dbReference>
<dbReference type="EMBL" id="BA000008">
    <property type="protein sequence ID" value="BAA98683.1"/>
    <property type="molecule type" value="Genomic_DNA"/>
</dbReference>
<dbReference type="EMBL" id="AE009440">
    <property type="protein sequence ID" value="AAP98427.1"/>
    <property type="molecule type" value="Genomic_DNA"/>
</dbReference>
<dbReference type="PIR" id="A86550">
    <property type="entry name" value="A86550"/>
</dbReference>
<dbReference type="PIR" id="G72074">
    <property type="entry name" value="G72074"/>
</dbReference>
<dbReference type="PIR" id="G81594">
    <property type="entry name" value="G81594"/>
</dbReference>
<dbReference type="RefSeq" id="NP_224673.1">
    <property type="nucleotide sequence ID" value="NC_000922.1"/>
</dbReference>
<dbReference type="RefSeq" id="WP_010883115.1">
    <property type="nucleotide sequence ID" value="NZ_LN847257.1"/>
</dbReference>
<dbReference type="RefSeq" id="WP_010892011.1">
    <property type="nucleotide sequence ID" value="NZ_LN846995.1"/>
</dbReference>
<dbReference type="SMR" id="Q9Z874"/>
<dbReference type="STRING" id="406984.CPK_ORF00992"/>
<dbReference type="GeneID" id="45050522"/>
<dbReference type="KEGG" id="cpa:CP_0277"/>
<dbReference type="KEGG" id="cpj:yqeV"/>
<dbReference type="KEGG" id="cpn:CPn_0477"/>
<dbReference type="KEGG" id="cpt:CpB0496"/>
<dbReference type="PATRIC" id="fig|115713.3.peg.534"/>
<dbReference type="eggNOG" id="COG0621">
    <property type="taxonomic scope" value="Bacteria"/>
</dbReference>
<dbReference type="HOGENOM" id="CLU_018697_2_0_0"/>
<dbReference type="OrthoDB" id="9805215at2"/>
<dbReference type="Proteomes" id="UP000000583">
    <property type="component" value="Chromosome"/>
</dbReference>
<dbReference type="Proteomes" id="UP000000801">
    <property type="component" value="Chromosome"/>
</dbReference>
<dbReference type="GO" id="GO:0005829">
    <property type="term" value="C:cytosol"/>
    <property type="evidence" value="ECO:0007669"/>
    <property type="project" value="TreeGrafter"/>
</dbReference>
<dbReference type="GO" id="GO:0051539">
    <property type="term" value="F:4 iron, 4 sulfur cluster binding"/>
    <property type="evidence" value="ECO:0007669"/>
    <property type="project" value="UniProtKB-KW"/>
</dbReference>
<dbReference type="GO" id="GO:0046872">
    <property type="term" value="F:metal ion binding"/>
    <property type="evidence" value="ECO:0007669"/>
    <property type="project" value="UniProtKB-KW"/>
</dbReference>
<dbReference type="GO" id="GO:0035597">
    <property type="term" value="F:N6-isopentenyladenosine methylthiotransferase activity"/>
    <property type="evidence" value="ECO:0007669"/>
    <property type="project" value="TreeGrafter"/>
</dbReference>
<dbReference type="GO" id="GO:0061712">
    <property type="term" value="F:tRNA (N(6)-L-threonylcarbamoyladenosine(37)-C(2))-methylthiotransferase"/>
    <property type="evidence" value="ECO:0007669"/>
    <property type="project" value="UniProtKB-EC"/>
</dbReference>
<dbReference type="FunFam" id="3.80.30.20:FF:000001">
    <property type="entry name" value="tRNA-2-methylthio-N(6)-dimethylallyladenosine synthase 2"/>
    <property type="match status" value="1"/>
</dbReference>
<dbReference type="Gene3D" id="3.40.50.12160">
    <property type="entry name" value="Methylthiotransferase, N-terminal domain"/>
    <property type="match status" value="1"/>
</dbReference>
<dbReference type="Gene3D" id="3.80.30.20">
    <property type="entry name" value="tm_1862 like domain"/>
    <property type="match status" value="1"/>
</dbReference>
<dbReference type="InterPro" id="IPR006638">
    <property type="entry name" value="Elp3/MiaA/NifB-like_rSAM"/>
</dbReference>
<dbReference type="InterPro" id="IPR005839">
    <property type="entry name" value="Methylthiotransferase"/>
</dbReference>
<dbReference type="InterPro" id="IPR020612">
    <property type="entry name" value="Methylthiotransferase_CS"/>
</dbReference>
<dbReference type="InterPro" id="IPR013848">
    <property type="entry name" value="Methylthiotransferase_N"/>
</dbReference>
<dbReference type="InterPro" id="IPR038135">
    <property type="entry name" value="Methylthiotransferase_N_sf"/>
</dbReference>
<dbReference type="InterPro" id="IPR006467">
    <property type="entry name" value="MiaB-like_bact"/>
</dbReference>
<dbReference type="InterPro" id="IPR007197">
    <property type="entry name" value="rSAM"/>
</dbReference>
<dbReference type="InterPro" id="IPR023404">
    <property type="entry name" value="rSAM_horseshoe"/>
</dbReference>
<dbReference type="NCBIfam" id="TIGR01579">
    <property type="entry name" value="MiaB-like-C"/>
    <property type="match status" value="1"/>
</dbReference>
<dbReference type="NCBIfam" id="TIGR00089">
    <property type="entry name" value="MiaB/RimO family radical SAM methylthiotransferase"/>
    <property type="match status" value="1"/>
</dbReference>
<dbReference type="PANTHER" id="PTHR43020">
    <property type="entry name" value="CDK5 REGULATORY SUBUNIT-ASSOCIATED PROTEIN 1"/>
    <property type="match status" value="1"/>
</dbReference>
<dbReference type="PANTHER" id="PTHR43020:SF2">
    <property type="entry name" value="MITOCHONDRIAL TRNA METHYLTHIOTRANSFERASE CDK5RAP1"/>
    <property type="match status" value="1"/>
</dbReference>
<dbReference type="Pfam" id="PF04055">
    <property type="entry name" value="Radical_SAM"/>
    <property type="match status" value="1"/>
</dbReference>
<dbReference type="Pfam" id="PF00919">
    <property type="entry name" value="UPF0004"/>
    <property type="match status" value="1"/>
</dbReference>
<dbReference type="SFLD" id="SFLDG01082">
    <property type="entry name" value="B12-binding_domain_containing"/>
    <property type="match status" value="1"/>
</dbReference>
<dbReference type="SFLD" id="SFLDG01061">
    <property type="entry name" value="methylthiotransferase"/>
    <property type="match status" value="1"/>
</dbReference>
<dbReference type="SFLD" id="SFLDS00029">
    <property type="entry name" value="Radical_SAM"/>
    <property type="match status" value="1"/>
</dbReference>
<dbReference type="SMART" id="SM00729">
    <property type="entry name" value="Elp3"/>
    <property type="match status" value="1"/>
</dbReference>
<dbReference type="SUPFAM" id="SSF102114">
    <property type="entry name" value="Radical SAM enzymes"/>
    <property type="match status" value="1"/>
</dbReference>
<dbReference type="PROSITE" id="PS51449">
    <property type="entry name" value="MTTASE_N"/>
    <property type="match status" value="1"/>
</dbReference>
<dbReference type="PROSITE" id="PS01278">
    <property type="entry name" value="MTTASE_RADICAL"/>
    <property type="match status" value="1"/>
</dbReference>
<dbReference type="PROSITE" id="PS51918">
    <property type="entry name" value="RADICAL_SAM"/>
    <property type="match status" value="1"/>
</dbReference>
<proteinExistence type="inferred from homology"/>
<evidence type="ECO:0000250" key="1">
    <source>
        <dbReference type="UniProtKB" id="P54462"/>
    </source>
</evidence>
<evidence type="ECO:0000255" key="2">
    <source>
        <dbReference type="PROSITE-ProRule" id="PRU00780"/>
    </source>
</evidence>
<evidence type="ECO:0000255" key="3">
    <source>
        <dbReference type="PROSITE-ProRule" id="PRU01266"/>
    </source>
</evidence>
<evidence type="ECO:0000305" key="4"/>
<comment type="function">
    <text evidence="1">Catalyzes the methylthiolation of N6-threonylcarbamoyladenosine (t(6)A), leading to the formation of 2-methylthio-N6-threonylcarbamoyladenosine (ms(2)t(6)A) at position 37 in tRNAs that read codons beginning with adenine.</text>
</comment>
<comment type="catalytic activity">
    <reaction evidence="1">
        <text>N(6)-L-threonylcarbamoyladenosine(37) in tRNA + (sulfur carrier)-SH + AH2 + 2 S-adenosyl-L-methionine = 2-methylsulfanyl-N(6)-L-threonylcarbamoyladenosine(37) in tRNA + (sulfur carrier)-H + 5'-deoxyadenosine + L-methionine + A + S-adenosyl-L-homocysteine + 2 H(+)</text>
        <dbReference type="Rhea" id="RHEA:37075"/>
        <dbReference type="Rhea" id="RHEA-COMP:10163"/>
        <dbReference type="Rhea" id="RHEA-COMP:11092"/>
        <dbReference type="Rhea" id="RHEA-COMP:14737"/>
        <dbReference type="Rhea" id="RHEA-COMP:14739"/>
        <dbReference type="ChEBI" id="CHEBI:13193"/>
        <dbReference type="ChEBI" id="CHEBI:15378"/>
        <dbReference type="ChEBI" id="CHEBI:17319"/>
        <dbReference type="ChEBI" id="CHEBI:17499"/>
        <dbReference type="ChEBI" id="CHEBI:29917"/>
        <dbReference type="ChEBI" id="CHEBI:57844"/>
        <dbReference type="ChEBI" id="CHEBI:57856"/>
        <dbReference type="ChEBI" id="CHEBI:59789"/>
        <dbReference type="ChEBI" id="CHEBI:64428"/>
        <dbReference type="ChEBI" id="CHEBI:74418"/>
        <dbReference type="ChEBI" id="CHEBI:74420"/>
        <dbReference type="EC" id="2.8.4.5"/>
    </reaction>
</comment>
<comment type="cofactor">
    <cofactor evidence="2">
        <name>[4Fe-4S] cluster</name>
        <dbReference type="ChEBI" id="CHEBI:49883"/>
    </cofactor>
    <text evidence="2">Binds 2 [4Fe-4S] clusters. One cluster is coordinated with 3 cysteines and an exchangeable S-adenosyl-L-methionine.</text>
</comment>
<comment type="subcellular location">
    <subcellularLocation>
        <location evidence="2">Cytoplasm</location>
    </subcellularLocation>
</comment>
<comment type="similarity">
    <text evidence="4">Belongs to the methylthiotransferase family. MtaB subfamily.</text>
</comment>